<gene>
    <name evidence="1" type="primary">NP</name>
</gene>
<protein>
    <recommendedName>
        <fullName evidence="1">Nucleoprotein</fullName>
    </recommendedName>
    <alternativeName>
        <fullName evidence="1">Nucleocapsid protein</fullName>
        <shortName evidence="1">Protein N</shortName>
    </alternativeName>
</protein>
<organism>
    <name type="scientific">Influenza A virus (strain A/Duck/England/1/1962 H4N6)</name>
    <dbReference type="NCBI Taxonomy" id="383549"/>
    <lineage>
        <taxon>Viruses</taxon>
        <taxon>Riboviria</taxon>
        <taxon>Orthornavirae</taxon>
        <taxon>Negarnaviricota</taxon>
        <taxon>Polyploviricotina</taxon>
        <taxon>Insthoviricetes</taxon>
        <taxon>Articulavirales</taxon>
        <taxon>Orthomyxoviridae</taxon>
        <taxon>Alphainfluenzavirus</taxon>
        <taxon>Alphainfluenzavirus influenzae</taxon>
        <taxon>Influenza A virus</taxon>
    </lineage>
</organism>
<accession>P26063</accession>
<keyword id="KW-0167">Capsid protein</keyword>
<keyword id="KW-1139">Helical capsid protein</keyword>
<keyword id="KW-1048">Host nucleus</keyword>
<keyword id="KW-0945">Host-virus interaction</keyword>
<keyword id="KW-0687">Ribonucleoprotein</keyword>
<keyword id="KW-0694">RNA-binding</keyword>
<keyword id="KW-0543">Viral nucleoprotein</keyword>
<keyword id="KW-1163">Viral penetration into host nucleus</keyword>
<keyword id="KW-0946">Virion</keyword>
<keyword id="KW-1160">Virus entry into host cell</keyword>
<evidence type="ECO:0000255" key="1">
    <source>
        <dbReference type="HAMAP-Rule" id="MF_04070"/>
    </source>
</evidence>
<evidence type="ECO:0000256" key="2">
    <source>
        <dbReference type="SAM" id="MobiDB-lite"/>
    </source>
</evidence>
<dbReference type="EMBL" id="M63781">
    <property type="protein sequence ID" value="AAA52242.1"/>
    <property type="molecule type" value="Genomic_RNA"/>
</dbReference>
<dbReference type="SMR" id="P26063"/>
<dbReference type="GO" id="GO:0019029">
    <property type="term" value="C:helical viral capsid"/>
    <property type="evidence" value="ECO:0007669"/>
    <property type="project" value="UniProtKB-UniRule"/>
</dbReference>
<dbReference type="GO" id="GO:0043657">
    <property type="term" value="C:host cell"/>
    <property type="evidence" value="ECO:0007669"/>
    <property type="project" value="GOC"/>
</dbReference>
<dbReference type="GO" id="GO:0042025">
    <property type="term" value="C:host cell nucleus"/>
    <property type="evidence" value="ECO:0007669"/>
    <property type="project" value="UniProtKB-SubCell"/>
</dbReference>
<dbReference type="GO" id="GO:1990904">
    <property type="term" value="C:ribonucleoprotein complex"/>
    <property type="evidence" value="ECO:0007669"/>
    <property type="project" value="UniProtKB-KW"/>
</dbReference>
<dbReference type="GO" id="GO:0019013">
    <property type="term" value="C:viral nucleocapsid"/>
    <property type="evidence" value="ECO:0007669"/>
    <property type="project" value="UniProtKB-UniRule"/>
</dbReference>
<dbReference type="GO" id="GO:0003723">
    <property type="term" value="F:RNA binding"/>
    <property type="evidence" value="ECO:0007669"/>
    <property type="project" value="UniProtKB-UniRule"/>
</dbReference>
<dbReference type="GO" id="GO:0005198">
    <property type="term" value="F:structural molecule activity"/>
    <property type="evidence" value="ECO:0007669"/>
    <property type="project" value="UniProtKB-UniRule"/>
</dbReference>
<dbReference type="GO" id="GO:0046718">
    <property type="term" value="P:symbiont entry into host cell"/>
    <property type="evidence" value="ECO:0007669"/>
    <property type="project" value="UniProtKB-KW"/>
</dbReference>
<dbReference type="GO" id="GO:0075732">
    <property type="term" value="P:viral penetration into host nucleus"/>
    <property type="evidence" value="ECO:0007669"/>
    <property type="project" value="UniProtKB-UniRule"/>
</dbReference>
<dbReference type="HAMAP" id="MF_04070">
    <property type="entry name" value="INFV_NCAP"/>
    <property type="match status" value="1"/>
</dbReference>
<dbReference type="InterPro" id="IPR002141">
    <property type="entry name" value="Flu_NP"/>
</dbReference>
<dbReference type="Pfam" id="PF00506">
    <property type="entry name" value="Flu_NP"/>
    <property type="match status" value="1"/>
</dbReference>
<dbReference type="SUPFAM" id="SSF161003">
    <property type="entry name" value="flu NP-like"/>
    <property type="match status" value="1"/>
</dbReference>
<sequence>MASQGTKRSYEQMETGGERQNATEIRASVGRMVGGIGRFYIQMCTELKLSDYEGRLIQNSITIERMVLSAFDERRNKYLEEHPSAGKDPKKTGGPIYRRRDGKWMRELILYDKEEIRRIWRQANNGEDATAGLTHLMIWHSNLNDATYQRTRALVRTGMDPRMCSLMQGSTLPRRSGAAGAAVKGVGTMVMELIRMIKRGINDRNFWRGENERRTRIAYERMCNILKGKFQTAAQRAMMDQVRESRNPGNAEIEDLIFLARSALILRGSVAHKSCLPACVYGLAVASGYDFEREGYSLVGIDPFRLLQNSQVFSLIRPNENPAHKSQLVWMACHSAAFEDLRVSSFIRGTRVVPRGQLSTRGVQIASNENMETMDSSTLELRSRYWAIRTRSGGNTNQQRASAGQISVQPTFSVQRNLPFERATIMAAFTGNTEGRTSDMRTEIIRMMESARPEDVSFQGRGVFELSDEKATNPIVPSFDMSNEGSYFFGDSAEEYDN</sequence>
<organismHost>
    <name type="scientific">Aves</name>
    <dbReference type="NCBI Taxonomy" id="8782"/>
</organismHost>
<organismHost>
    <name type="scientific">Sus scrofa</name>
    <name type="common">Pig</name>
    <dbReference type="NCBI Taxonomy" id="9823"/>
</organismHost>
<reference key="1">
    <citation type="journal article" date="1991" name="J. Virol.">
        <title>Evolution of influenza A virus nucleoprotein genes: implications for the origins of H1N1 human and classical swine viruses.</title>
        <authorList>
            <person name="Gorman O.T."/>
            <person name="Bean W.J."/>
            <person name="Kawaoka Y."/>
            <person name="Donatelli I."/>
            <person name="Guo Y."/>
            <person name="Webster R.G."/>
        </authorList>
    </citation>
    <scope>NUCLEOTIDE SEQUENCE [GENOMIC RNA]</scope>
</reference>
<name>NCAP_I62A0</name>
<proteinExistence type="inferred from homology"/>
<comment type="function">
    <text evidence="1">Encapsidates the negative strand viral RNA, protecting it from nucleases. The encapsidated genomic RNA is termed the ribonucleoprotein (RNP) and serves as template for transcription and replication. The RNP needs to be localized in the host nucleus to start an infectious cycle, but is too large to diffuse through the nuclear pore complex. NP comprises at least 2 nuclear localization signals that are responsible for the active RNP import into the nucleus through cellular importin alpha/beta pathway. Later in the infection, nclear export of RNPs are mediated through viral proteins NEP interacting with M1 which binds nucleoproteins. It is possible that nucleoprotein binds directly host exportin-1/XPO1 and plays an active role in RNPs nuclear export. M1 interaction with RNP seems to hide nucleoprotein's nuclear localization signals. Soon after a virion infects a new cell, M1 dissociates from the RNP under acidification of the virion driven by M2 protein. Dissociation of M1 from RNP unmasks nucleoprotein's nuclear localization signals, targeting the RNP to the nucleus.</text>
</comment>
<comment type="subunit">
    <text evidence="1">Homomultimerizes to form the nucleocapsid. May bind host exportin-1/XPO1. Binds to viral genomic RNA. Protein-RNA contacts are mediated by a combination of electrostatic interactions between positively charged residues and the phosphate backbone and planar interactions between aromatic side chains and bases.</text>
</comment>
<comment type="subcellular location">
    <subcellularLocation>
        <location evidence="1">Virion</location>
    </subcellularLocation>
    <subcellularLocation>
        <location evidence="1">Host nucleus</location>
    </subcellularLocation>
</comment>
<comment type="PTM">
    <text evidence="1">Late in virus-infected cells, may be cleaved from a 56-kDa protein to a 53-kDa protein by a cellular caspase. This cleavage might be a marker for the onset of apoptosis in infected cells or have a specific function in virus host interaction.</text>
</comment>
<comment type="similarity">
    <text evidence="1">Belongs to the influenza viruses nucleoprotein family.</text>
</comment>
<feature type="chain" id="PRO_0000079036" description="Nucleoprotein">
    <location>
        <begin position="1"/>
        <end position="498"/>
    </location>
</feature>
<feature type="region of interest" description="Disordered" evidence="2">
    <location>
        <begin position="1"/>
        <end position="21"/>
    </location>
</feature>
<feature type="short sequence motif" description="Unconventional nuclear localization signal" evidence="1">
    <location>
        <begin position="1"/>
        <end position="18"/>
    </location>
</feature>
<feature type="short sequence motif" description="Bipartite nuclear localization signal" evidence="1">
    <location>
        <begin position="198"/>
        <end position="216"/>
    </location>
</feature>